<keyword id="KW-0025">Alternative splicing</keyword>
<keyword id="KW-0343">GTPase activation</keyword>
<keyword id="KW-1185">Reference proteome</keyword>
<keyword id="KW-0728">SH3 domain</keyword>
<sequence>MEGIEESFAPLSPKSPFARRNGRSLRIQRLVDCQHFHYSSVELGPVRVAIIAINADENATERIKMRVESESNSWLVERSREDWAVFDRQLHRCVFERRHSRLDELFPLIHLETAKFEEVLVKYTERLSELTGSIITCYPVLKFLEIDSRGGHFEPAEETSINVPAIAAAVVTKDFEPTESSQLRLRVGDIVSITEMSTASPSEQTFWKAKLTISNQKIVDPQNARLGFEIGYFPRDCVMLIDDKRLPNPLNNEQKASTRNARRYMTTMFRNRRREPIFGLELTDLYMRTGKKVPVIVEKCCASIEDQGIVTGIYRQCGIQSNIQRLRAKFDSGAEPDLHEFGQRDIYSVSSLLKQYFRQLPNPLFTYQAYPKLIEAFEKEDSLSEKVESLRFSLETMPEAHYRTAKFLMEHLTRLCKSKSLTDMTSKNLAIVWSPNLFRPPPTLNGADTHLLSGLNVHTAICDFFIENSESLFVNDIDEEQSKCTSVENSFTTISKSATMSDMRSESESKWPRFFRGKSVEGFWKFNRKQQTSTGELCGSPTSEVKWRSRSTRSHSTDAAFQSSRTDSFIQLMHTGMDQIREGMRIFRARARSMRPTSRPPPSPRTRRARFSNGSSNNVQKLNESDIQHEIPLATTEPSITPEPKNTVDPHQIMTRTISVNDSDDQSFEENGLREMRERKVMFKAATQEHVATFHERSSPVEEWSSDSRESLHLEMSRYDNVSPSGTITRNQREPITNLSPAAQMLFFESSRASHLFSA</sequence>
<accession>Q20498</accession>
<accession>Q5WRQ3</accession>
<proteinExistence type="evidence at protein level"/>
<protein>
    <recommendedName>
        <fullName>GTPase-activating protein rrc-1</fullName>
    </recommendedName>
    <alternativeName>
        <fullName>RhoGAP for Rac-1 and Cdc-42</fullName>
    </alternativeName>
</protein>
<organism>
    <name type="scientific">Caenorhabditis elegans</name>
    <dbReference type="NCBI Taxonomy" id="6239"/>
    <lineage>
        <taxon>Eukaryota</taxon>
        <taxon>Metazoa</taxon>
        <taxon>Ecdysozoa</taxon>
        <taxon>Nematoda</taxon>
        <taxon>Chromadorea</taxon>
        <taxon>Rhabditida</taxon>
        <taxon>Rhabditina</taxon>
        <taxon>Rhabditomorpha</taxon>
        <taxon>Rhabditoidea</taxon>
        <taxon>Rhabditidae</taxon>
        <taxon>Peloderinae</taxon>
        <taxon>Caenorhabditis</taxon>
    </lineage>
</organism>
<feature type="chain" id="PRO_0000320116" description="GTPase-activating protein rrc-1">
    <location>
        <begin position="1"/>
        <end position="759"/>
    </location>
</feature>
<feature type="domain" description="SH3" evidence="2">
    <location>
        <begin position="164"/>
        <end position="243"/>
    </location>
</feature>
<feature type="domain" description="Rho-GAP" evidence="1">
    <location>
        <begin position="280"/>
        <end position="473"/>
    </location>
</feature>
<feature type="region of interest" description="Disordered" evidence="3">
    <location>
        <begin position="591"/>
        <end position="624"/>
    </location>
</feature>
<feature type="compositionally biased region" description="Polar residues" evidence="3">
    <location>
        <begin position="612"/>
        <end position="622"/>
    </location>
</feature>
<feature type="site" description="Arginine finger; crucial for GTP hydrolysis by stabilizing the transition state" evidence="1">
    <location>
        <position position="315"/>
    </location>
</feature>
<feature type="splice variant" id="VSP_031596" description="In isoform b." evidence="5">
    <original>MEGIEESFAPLSPKSPFARRNGRS</original>
    <variation>MDPEIPG</variation>
    <location>
        <begin position="1"/>
        <end position="24"/>
    </location>
</feature>
<evidence type="ECO:0000255" key="1">
    <source>
        <dbReference type="PROSITE-ProRule" id="PRU00172"/>
    </source>
</evidence>
<evidence type="ECO:0000255" key="2">
    <source>
        <dbReference type="PROSITE-ProRule" id="PRU00192"/>
    </source>
</evidence>
<evidence type="ECO:0000256" key="3">
    <source>
        <dbReference type="SAM" id="MobiDB-lite"/>
    </source>
</evidence>
<evidence type="ECO:0000269" key="4">
    <source>
    </source>
</evidence>
<evidence type="ECO:0000305" key="5"/>
<dbReference type="EMBL" id="Z49888">
    <property type="protein sequence ID" value="CAA90063.2"/>
    <property type="molecule type" value="Genomic_DNA"/>
</dbReference>
<dbReference type="EMBL" id="Z49888">
    <property type="protein sequence ID" value="CAH60776.1"/>
    <property type="molecule type" value="Genomic_DNA"/>
</dbReference>
<dbReference type="PIR" id="T22329">
    <property type="entry name" value="T22329"/>
</dbReference>
<dbReference type="RefSeq" id="NP_001024683.1">
    <molecule id="Q20498-1"/>
    <property type="nucleotide sequence ID" value="NM_001029512.5"/>
</dbReference>
<dbReference type="RefSeq" id="NP_001024684.1">
    <molecule id="Q20498-2"/>
    <property type="nucleotide sequence ID" value="NM_001029513.6"/>
</dbReference>
<dbReference type="SMR" id="Q20498"/>
<dbReference type="BioGRID" id="46110">
    <property type="interactions" value="32"/>
</dbReference>
<dbReference type="IntAct" id="Q20498">
    <property type="interactions" value="31"/>
</dbReference>
<dbReference type="STRING" id="6239.F47A4.3a.1"/>
<dbReference type="PaxDb" id="6239-F47A4.3a"/>
<dbReference type="EnsemblMetazoa" id="F47A4.3a.1">
    <molecule id="Q20498-1"/>
    <property type="protein sequence ID" value="F47A4.3a.1"/>
    <property type="gene ID" value="WBGene00009800"/>
</dbReference>
<dbReference type="EnsemblMetazoa" id="F47A4.3b.1">
    <molecule id="Q20498-2"/>
    <property type="protein sequence ID" value="F47A4.3b.1"/>
    <property type="gene ID" value="WBGene00009800"/>
</dbReference>
<dbReference type="GeneID" id="181195"/>
<dbReference type="KEGG" id="cel:CELE_F47A4.3"/>
<dbReference type="UCSC" id="F47A4.3a">
    <molecule id="Q20498-1"/>
    <property type="organism name" value="c. elegans"/>
</dbReference>
<dbReference type="AGR" id="WB:WBGene00009800"/>
<dbReference type="CTD" id="181195"/>
<dbReference type="WormBase" id="F47A4.3a">
    <molecule id="Q20498-1"/>
    <property type="protein sequence ID" value="CE34188"/>
    <property type="gene ID" value="WBGene00009800"/>
    <property type="gene designation" value="rrc-1"/>
</dbReference>
<dbReference type="WormBase" id="F47A4.3b">
    <molecule id="Q20498-2"/>
    <property type="protein sequence ID" value="CE37375"/>
    <property type="gene ID" value="WBGene00009800"/>
    <property type="gene designation" value="rrc-1"/>
</dbReference>
<dbReference type="eggNOG" id="KOG1449">
    <property type="taxonomic scope" value="Eukaryota"/>
</dbReference>
<dbReference type="GeneTree" id="ENSGT00940000168991"/>
<dbReference type="InParanoid" id="Q20498"/>
<dbReference type="OMA" id="MFRNRRR"/>
<dbReference type="OrthoDB" id="79452at2759"/>
<dbReference type="PhylomeDB" id="Q20498"/>
<dbReference type="PRO" id="PR:Q20498"/>
<dbReference type="Proteomes" id="UP000001940">
    <property type="component" value="Chromosome X"/>
</dbReference>
<dbReference type="Bgee" id="WBGene00009800">
    <property type="expression patterns" value="Expressed in pharyngeal muscle cell (C elegans) and 3 other cell types or tissues"/>
</dbReference>
<dbReference type="ExpressionAtlas" id="Q20498">
    <property type="expression patterns" value="baseline and differential"/>
</dbReference>
<dbReference type="GO" id="GO:0005096">
    <property type="term" value="F:GTPase activator activity"/>
    <property type="evidence" value="ECO:0000314"/>
    <property type="project" value="UniProtKB"/>
</dbReference>
<dbReference type="GO" id="GO:0043547">
    <property type="term" value="P:positive regulation of GTPase activity"/>
    <property type="evidence" value="ECO:0000314"/>
    <property type="project" value="UniProtKB"/>
</dbReference>
<dbReference type="GO" id="GO:0007165">
    <property type="term" value="P:signal transduction"/>
    <property type="evidence" value="ECO:0007669"/>
    <property type="project" value="InterPro"/>
</dbReference>
<dbReference type="FunFam" id="1.10.555.10:FF:000140">
    <property type="entry name" value="GTPase-activating protein rrc-1"/>
    <property type="match status" value="1"/>
</dbReference>
<dbReference type="FunFam" id="2.30.30.40:FF:000346">
    <property type="entry name" value="GTPase-activating protein rrc-1"/>
    <property type="match status" value="1"/>
</dbReference>
<dbReference type="Gene3D" id="1.10.555.10">
    <property type="entry name" value="Rho GTPase activation protein"/>
    <property type="match status" value="1"/>
</dbReference>
<dbReference type="Gene3D" id="2.30.30.40">
    <property type="entry name" value="SH3 Domains"/>
    <property type="match status" value="1"/>
</dbReference>
<dbReference type="InterPro" id="IPR051576">
    <property type="entry name" value="PX-Rho_GAP"/>
</dbReference>
<dbReference type="InterPro" id="IPR008936">
    <property type="entry name" value="Rho_GTPase_activation_prot"/>
</dbReference>
<dbReference type="InterPro" id="IPR000198">
    <property type="entry name" value="RhoGAP_dom"/>
</dbReference>
<dbReference type="InterPro" id="IPR036028">
    <property type="entry name" value="SH3-like_dom_sf"/>
</dbReference>
<dbReference type="InterPro" id="IPR001452">
    <property type="entry name" value="SH3_domain"/>
</dbReference>
<dbReference type="PANTHER" id="PTHR15729">
    <property type="entry name" value="CDC42 GTPASE-ACTIVATING PROTEIN"/>
    <property type="match status" value="1"/>
</dbReference>
<dbReference type="PANTHER" id="PTHR15729:SF10">
    <property type="entry name" value="GTPASE-ACTIVATING PROTEIN CDGAPR"/>
    <property type="match status" value="1"/>
</dbReference>
<dbReference type="Pfam" id="PF00620">
    <property type="entry name" value="RhoGAP"/>
    <property type="match status" value="1"/>
</dbReference>
<dbReference type="SMART" id="SM00324">
    <property type="entry name" value="RhoGAP"/>
    <property type="match status" value="1"/>
</dbReference>
<dbReference type="SMART" id="SM00326">
    <property type="entry name" value="SH3"/>
    <property type="match status" value="1"/>
</dbReference>
<dbReference type="SUPFAM" id="SSF48350">
    <property type="entry name" value="GTPase activation domain, GAP"/>
    <property type="match status" value="1"/>
</dbReference>
<dbReference type="SUPFAM" id="SSF50044">
    <property type="entry name" value="SH3-domain"/>
    <property type="match status" value="1"/>
</dbReference>
<dbReference type="PROSITE" id="PS50238">
    <property type="entry name" value="RHOGAP"/>
    <property type="match status" value="1"/>
</dbReference>
<dbReference type="PROSITE" id="PS50002">
    <property type="entry name" value="SH3"/>
    <property type="match status" value="1"/>
</dbReference>
<reference key="1">
    <citation type="journal article" date="1998" name="Science">
        <title>Genome sequence of the nematode C. elegans: a platform for investigating biology.</title>
        <authorList>
            <consortium name="The C. elegans sequencing consortium"/>
        </authorList>
    </citation>
    <scope>NUCLEOTIDE SEQUENCE [LARGE SCALE GENOMIC DNA]</scope>
    <scope>ALTERNATIVE SPLICING (ISOFORMS A AND B)</scope>
    <source>
        <strain>Bristol N2</strain>
    </source>
</reference>
<reference key="2">
    <citation type="journal article" date="2007" name="Biochem. Biophys. Res. Commun.">
        <title>Molecular characterization of a novel RhoGAP, RRC-1 of the nematode Caenorhabditis elegans.</title>
        <authorList>
            <person name="Delawary M."/>
            <person name="Nakazawa T."/>
            <person name="Tezuka T."/>
            <person name="Sawa M."/>
            <person name="Iino Y."/>
            <person name="Takenawa T."/>
            <person name="Yamamoto T."/>
        </authorList>
    </citation>
    <scope>FUNCTION</scope>
    <scope>DEVELOPMENTAL STAGE</scope>
    <scope>TISSUE SPECIFICITY</scope>
</reference>
<gene>
    <name type="primary">rrc-1</name>
    <name type="ORF">F47A4.3</name>
</gene>
<comment type="function">
    <text evidence="4">Functions as a GTPase-activating protein (GAP) for ced-10/rac-1 and CDC42.</text>
</comment>
<comment type="interaction">
    <interactant intactId="EBI-2316401">
        <id>Q20498</id>
    </interactant>
    <interactant intactId="EBI-2316398">
        <id>O17099</id>
        <label>CELE_F42G2.5</label>
    </interactant>
    <organismsDiffer>false</organismsDiffer>
    <experiments>5</experiments>
</comment>
<comment type="alternative products">
    <event type="alternative splicing"/>
    <isoform>
        <id>Q20498-1</id>
        <name>a</name>
        <sequence type="displayed"/>
    </isoform>
    <isoform>
        <id>Q20498-2</id>
        <name>b</name>
        <sequence type="described" ref="VSP_031596"/>
    </isoform>
</comment>
<comment type="tissue specificity">
    <text evidence="4">Expressed in coelomocytes, excretory cells, uterine-seam cells and GLR cells.</text>
</comment>
<comment type="developmental stage">
    <text evidence="4">Expressed in all life stages with high expression in L1-L4 larvae stages.</text>
</comment>
<name>RRC1_CAEEL</name>